<feature type="chain" id="PRO_0000443399" description="Small integral membrane protein 33">
    <location>
        <begin position="1"/>
        <end position="132"/>
    </location>
</feature>
<feature type="transmembrane region" description="Helical" evidence="1">
    <location>
        <begin position="43"/>
        <end position="63"/>
    </location>
</feature>
<feature type="region of interest" description="Disordered" evidence="2">
    <location>
        <begin position="1"/>
        <end position="28"/>
    </location>
</feature>
<feature type="region of interest" description="Disordered" evidence="2">
    <location>
        <begin position="99"/>
        <end position="132"/>
    </location>
</feature>
<feature type="glycosylation site" description="N-linked (GlcNAc...) asparagine" evidence="1">
    <location>
        <position position="15"/>
    </location>
</feature>
<name>SIM33_HUMAN</name>
<organism>
    <name type="scientific">Homo sapiens</name>
    <name type="common">Human</name>
    <dbReference type="NCBI Taxonomy" id="9606"/>
    <lineage>
        <taxon>Eukaryota</taxon>
        <taxon>Metazoa</taxon>
        <taxon>Chordata</taxon>
        <taxon>Craniata</taxon>
        <taxon>Vertebrata</taxon>
        <taxon>Euteleostomi</taxon>
        <taxon>Mammalia</taxon>
        <taxon>Eutheria</taxon>
        <taxon>Euarchontoglires</taxon>
        <taxon>Primates</taxon>
        <taxon>Haplorrhini</taxon>
        <taxon>Catarrhini</taxon>
        <taxon>Hominidae</taxon>
        <taxon>Homo</taxon>
    </lineage>
</organism>
<comment type="subcellular location">
    <subcellularLocation>
        <location evidence="1">Membrane</location>
        <topology evidence="1">Single-pass membrane protein</topology>
    </subcellularLocation>
</comment>
<gene>
    <name evidence="3" type="primary">SMIM33</name>
</gene>
<dbReference type="EMBL" id="AC138517">
    <property type="status" value="NOT_ANNOTATED_CDS"/>
    <property type="molecule type" value="Genomic_DNA"/>
</dbReference>
<dbReference type="CCDS" id="CCDS93790.1"/>
<dbReference type="RefSeq" id="NP_001352126.1">
    <property type="nucleotide sequence ID" value="NM_001365197.1"/>
</dbReference>
<dbReference type="STRING" id="9606.ENSP00000490796"/>
<dbReference type="GlyCosmos" id="A0A1B0GW64">
    <property type="glycosylation" value="1 site, No reported glycans"/>
</dbReference>
<dbReference type="GlyGen" id="A0A1B0GW64">
    <property type="glycosylation" value="1 site"/>
</dbReference>
<dbReference type="BioMuta" id="ENSG00000283288"/>
<dbReference type="Ensembl" id="ENST00000637503.2">
    <property type="protein sequence ID" value="ENSP00000490796.1"/>
    <property type="gene ID" value="ENSG00000283288.2"/>
</dbReference>
<dbReference type="Ensembl" id="ENST00000671802.1">
    <property type="protein sequence ID" value="ENSP00000500347.1"/>
    <property type="gene ID" value="ENSG00000288274.1"/>
</dbReference>
<dbReference type="GeneID" id="111064649"/>
<dbReference type="MANE-Select" id="ENST00000637503.2">
    <property type="protein sequence ID" value="ENSP00000490796.1"/>
    <property type="RefSeq nucleotide sequence ID" value="NM_001365197.1"/>
    <property type="RefSeq protein sequence ID" value="NP_001352126.1"/>
</dbReference>
<dbReference type="AGR" id="HGNC:53645"/>
<dbReference type="GeneCards" id="SMIM33"/>
<dbReference type="HGNC" id="HGNC:53645">
    <property type="gene designation" value="SMIM33"/>
</dbReference>
<dbReference type="HPA" id="ENSG00000283288">
    <property type="expression patterns" value="Tissue enhanced (intestine, salivary gland)"/>
</dbReference>
<dbReference type="neXtProt" id="NX_A0A1B0GW64"/>
<dbReference type="OpenTargets" id="ENSG00000283288"/>
<dbReference type="VEuPathDB" id="HostDB:ENSG00000283288"/>
<dbReference type="GeneTree" id="ENSGT00390000006836"/>
<dbReference type="InParanoid" id="A0A1B0GW64"/>
<dbReference type="OMA" id="HEDAQQE"/>
<dbReference type="OrthoDB" id="9449854at2759"/>
<dbReference type="PAN-GO" id="A0A1B0GW64">
    <property type="GO annotations" value="0 GO annotations based on evolutionary models"/>
</dbReference>
<dbReference type="Pharos" id="A0A1B0GW64">
    <property type="development level" value="Tdark"/>
</dbReference>
<dbReference type="PRO" id="PR:A0A1B0GW64"/>
<dbReference type="Proteomes" id="UP000005640">
    <property type="component" value="Chromosome 5"/>
</dbReference>
<dbReference type="RNAct" id="A0A1B0GW64">
    <property type="molecule type" value="protein"/>
</dbReference>
<dbReference type="Bgee" id="ENSG00000283288">
    <property type="expression patterns" value="Expressed in mucosa of transverse colon and 14 other cell types or tissues"/>
</dbReference>
<dbReference type="GO" id="GO:0016020">
    <property type="term" value="C:membrane"/>
    <property type="evidence" value="ECO:0007669"/>
    <property type="project" value="UniProtKB-SubCell"/>
</dbReference>
<dbReference type="InterPro" id="IPR038803">
    <property type="entry name" value="SMIM33"/>
</dbReference>
<dbReference type="PANTHER" id="PTHR37873">
    <property type="entry name" value="SMALL INTEGRAL MEMBRANE PROTEIN 33"/>
    <property type="match status" value="1"/>
</dbReference>
<dbReference type="PANTHER" id="PTHR37873:SF1">
    <property type="entry name" value="SMALL INTEGRAL MEMBRANE PROTEIN 33"/>
    <property type="match status" value="1"/>
</dbReference>
<accession>A0A1B0GW64</accession>
<sequence length="132" mass="14123">MHQAGHYSWPSPAVNSSSEQEPQRQLPEVLSGTWEQPRVDGLPVVTVIVAVFVLLAVCIIVAVHFGPRLHQGHATLPTEPPTPKPDGGIYLIHWRVLGPQDSPEEAPPGPLVPGSCPAPDGPRPSIDEVTCL</sequence>
<evidence type="ECO:0000255" key="1"/>
<evidence type="ECO:0000256" key="2">
    <source>
        <dbReference type="SAM" id="MobiDB-lite"/>
    </source>
</evidence>
<evidence type="ECO:0000312" key="3">
    <source>
        <dbReference type="HGNC" id="HGNC:53645"/>
    </source>
</evidence>
<protein>
    <recommendedName>
        <fullName evidence="3">Small integral membrane protein 33</fullName>
    </recommendedName>
</protein>
<proteinExistence type="inferred from homology"/>
<reference key="1">
    <citation type="journal article" date="2004" name="Nature">
        <title>The DNA sequence and comparative analysis of human chromosome 5.</title>
        <authorList>
            <person name="Schmutz J."/>
            <person name="Martin J."/>
            <person name="Terry A."/>
            <person name="Couronne O."/>
            <person name="Grimwood J."/>
            <person name="Lowry S."/>
            <person name="Gordon L.A."/>
            <person name="Scott D."/>
            <person name="Xie G."/>
            <person name="Huang W."/>
            <person name="Hellsten U."/>
            <person name="Tran-Gyamfi M."/>
            <person name="She X."/>
            <person name="Prabhakar S."/>
            <person name="Aerts A."/>
            <person name="Altherr M."/>
            <person name="Bajorek E."/>
            <person name="Black S."/>
            <person name="Branscomb E."/>
            <person name="Caoile C."/>
            <person name="Challacombe J.F."/>
            <person name="Chan Y.M."/>
            <person name="Denys M."/>
            <person name="Detter J.C."/>
            <person name="Escobar J."/>
            <person name="Flowers D."/>
            <person name="Fotopulos D."/>
            <person name="Glavina T."/>
            <person name="Gomez M."/>
            <person name="Gonzales E."/>
            <person name="Goodstein D."/>
            <person name="Grigoriev I."/>
            <person name="Groza M."/>
            <person name="Hammon N."/>
            <person name="Hawkins T."/>
            <person name="Haydu L."/>
            <person name="Israni S."/>
            <person name="Jett J."/>
            <person name="Kadner K."/>
            <person name="Kimball H."/>
            <person name="Kobayashi A."/>
            <person name="Lopez F."/>
            <person name="Lou Y."/>
            <person name="Martinez D."/>
            <person name="Medina C."/>
            <person name="Morgan J."/>
            <person name="Nandkeshwar R."/>
            <person name="Noonan J.P."/>
            <person name="Pitluck S."/>
            <person name="Pollard M."/>
            <person name="Predki P."/>
            <person name="Priest J."/>
            <person name="Ramirez L."/>
            <person name="Retterer J."/>
            <person name="Rodriguez A."/>
            <person name="Rogers S."/>
            <person name="Salamov A."/>
            <person name="Salazar A."/>
            <person name="Thayer N."/>
            <person name="Tice H."/>
            <person name="Tsai M."/>
            <person name="Ustaszewska A."/>
            <person name="Vo N."/>
            <person name="Wheeler J."/>
            <person name="Wu K."/>
            <person name="Yang J."/>
            <person name="Dickson M."/>
            <person name="Cheng J.-F."/>
            <person name="Eichler E.E."/>
            <person name="Olsen A."/>
            <person name="Pennacchio L.A."/>
            <person name="Rokhsar D.S."/>
            <person name="Richardson P."/>
            <person name="Lucas S.M."/>
            <person name="Myers R.M."/>
            <person name="Rubin E.M."/>
        </authorList>
    </citation>
    <scope>NUCLEOTIDE SEQUENCE [LARGE SCALE GENOMIC DNA]</scope>
</reference>
<keyword id="KW-0325">Glycoprotein</keyword>
<keyword id="KW-0472">Membrane</keyword>
<keyword id="KW-1185">Reference proteome</keyword>
<keyword id="KW-0812">Transmembrane</keyword>
<keyword id="KW-1133">Transmembrane helix</keyword>